<organism>
    <name type="scientific">Bos taurus</name>
    <name type="common">Bovine</name>
    <dbReference type="NCBI Taxonomy" id="9913"/>
    <lineage>
        <taxon>Eukaryota</taxon>
        <taxon>Metazoa</taxon>
        <taxon>Chordata</taxon>
        <taxon>Craniata</taxon>
        <taxon>Vertebrata</taxon>
        <taxon>Euteleostomi</taxon>
        <taxon>Mammalia</taxon>
        <taxon>Eutheria</taxon>
        <taxon>Laurasiatheria</taxon>
        <taxon>Artiodactyla</taxon>
        <taxon>Ruminantia</taxon>
        <taxon>Pecora</taxon>
        <taxon>Bovidae</taxon>
        <taxon>Bovinae</taxon>
        <taxon>Bos</taxon>
    </lineage>
</organism>
<evidence type="ECO:0000250" key="1"/>
<evidence type="ECO:0000250" key="2">
    <source>
        <dbReference type="UniProtKB" id="Q96A58"/>
    </source>
</evidence>
<evidence type="ECO:0000305" key="3"/>
<gene>
    <name type="primary">RERGL</name>
</gene>
<feature type="chain" id="PRO_0000320562" description="Ras-related and estrogen-regulated growth inhibitor-like protein">
    <location>
        <begin position="1"/>
        <end position="204"/>
    </location>
</feature>
<feature type="region of interest" description="Small GTPase-like">
    <location>
        <begin position="1"/>
        <end position="204"/>
    </location>
</feature>
<feature type="binding site" evidence="1">
    <location>
        <begin position="10"/>
        <end position="17"/>
    </location>
    <ligand>
        <name>GTP</name>
        <dbReference type="ChEBI" id="CHEBI:37565"/>
    </ligand>
</feature>
<feature type="binding site" evidence="1">
    <location>
        <begin position="57"/>
        <end position="63"/>
    </location>
    <ligand>
        <name>GTP</name>
        <dbReference type="ChEBI" id="CHEBI:37565"/>
    </ligand>
</feature>
<feature type="binding site" evidence="1">
    <location>
        <begin position="122"/>
        <end position="125"/>
    </location>
    <ligand>
        <name>GTP</name>
        <dbReference type="ChEBI" id="CHEBI:37565"/>
    </ligand>
</feature>
<keyword id="KW-0342">GTP-binding</keyword>
<keyword id="KW-0378">Hydrolase</keyword>
<keyword id="KW-0547">Nucleotide-binding</keyword>
<keyword id="KW-1185">Reference proteome</keyword>
<comment type="function">
    <text evidence="1">Binds GDP/GTP and may possess intrinsic GTPase activity.</text>
</comment>
<comment type="catalytic activity">
    <reaction evidence="2">
        <text>GTP + H2O = GDP + phosphate + H(+)</text>
        <dbReference type="Rhea" id="RHEA:19669"/>
        <dbReference type="ChEBI" id="CHEBI:15377"/>
        <dbReference type="ChEBI" id="CHEBI:15378"/>
        <dbReference type="ChEBI" id="CHEBI:37565"/>
        <dbReference type="ChEBI" id="CHEBI:43474"/>
        <dbReference type="ChEBI" id="CHEBI:58189"/>
        <dbReference type="EC" id="3.6.5.2"/>
    </reaction>
</comment>
<comment type="similarity">
    <text evidence="3">Belongs to the small GTPase superfamily. Ras family.</text>
</comment>
<protein>
    <recommendedName>
        <fullName>Ras-related and estrogen-regulated growth inhibitor-like protein</fullName>
        <ecNumber evidence="2">3.6.5.2</ecNumber>
    </recommendedName>
    <alternativeName>
        <fullName>RERG/Ras-like protein</fullName>
    </alternativeName>
</protein>
<reference key="1">
    <citation type="submission" date="2007-07" db="EMBL/GenBank/DDBJ databases">
        <authorList>
            <consortium name="NIH - Mammalian Gene Collection (MGC) project"/>
        </authorList>
    </citation>
    <scope>NUCLEOTIDE SEQUENCE [LARGE SCALE MRNA]</scope>
    <source>
        <strain>Hereford</strain>
        <tissue>Uterus</tissue>
    </source>
</reference>
<dbReference type="EC" id="3.6.5.2" evidence="2"/>
<dbReference type="EMBL" id="BC149174">
    <property type="protein sequence ID" value="AAI49175.1"/>
    <property type="molecule type" value="mRNA"/>
</dbReference>
<dbReference type="RefSeq" id="NP_001098942.1">
    <property type="nucleotide sequence ID" value="NM_001105472.2"/>
</dbReference>
<dbReference type="SMR" id="A6QP66"/>
<dbReference type="FunCoup" id="A6QP66">
    <property type="interactions" value="85"/>
</dbReference>
<dbReference type="STRING" id="9913.ENSBTAP00000040628"/>
<dbReference type="PaxDb" id="9913-ENSBTAP00000040628"/>
<dbReference type="Ensembl" id="ENSBTAT00000043032.4">
    <property type="protein sequence ID" value="ENSBTAP00000040628.3"/>
    <property type="gene ID" value="ENSBTAG00000030493.4"/>
</dbReference>
<dbReference type="GeneID" id="100125833"/>
<dbReference type="KEGG" id="bta:100125833"/>
<dbReference type="CTD" id="79785"/>
<dbReference type="VEuPathDB" id="HostDB:ENSBTAG00000030493"/>
<dbReference type="VGNC" id="VGNC:33874">
    <property type="gene designation" value="RERGL"/>
</dbReference>
<dbReference type="eggNOG" id="KOG0395">
    <property type="taxonomic scope" value="Eukaryota"/>
</dbReference>
<dbReference type="GeneTree" id="ENSGT00940000161146"/>
<dbReference type="HOGENOM" id="CLU_041217_9_7_1"/>
<dbReference type="InParanoid" id="A6QP66"/>
<dbReference type="OMA" id="LDYRCQF"/>
<dbReference type="OrthoDB" id="18798at2759"/>
<dbReference type="TreeFam" id="TF318030"/>
<dbReference type="Proteomes" id="UP000009136">
    <property type="component" value="Chromosome 5"/>
</dbReference>
<dbReference type="Bgee" id="ENSBTAG00000030493">
    <property type="expression patterns" value="Expressed in ureter and 93 other cell types or tissues"/>
</dbReference>
<dbReference type="GO" id="GO:0003925">
    <property type="term" value="F:G protein activity"/>
    <property type="evidence" value="ECO:0007669"/>
    <property type="project" value="UniProtKB-EC"/>
</dbReference>
<dbReference type="GO" id="GO:0005525">
    <property type="term" value="F:GTP binding"/>
    <property type="evidence" value="ECO:0007669"/>
    <property type="project" value="UniProtKB-KW"/>
</dbReference>
<dbReference type="CDD" id="cd04146">
    <property type="entry name" value="RERG_RasL11_like"/>
    <property type="match status" value="1"/>
</dbReference>
<dbReference type="Gene3D" id="3.40.50.300">
    <property type="entry name" value="P-loop containing nucleotide triphosphate hydrolases"/>
    <property type="match status" value="1"/>
</dbReference>
<dbReference type="InterPro" id="IPR027417">
    <property type="entry name" value="P-loop_NTPase"/>
</dbReference>
<dbReference type="InterPro" id="IPR051065">
    <property type="entry name" value="Ras-related_GTPase"/>
</dbReference>
<dbReference type="InterPro" id="IPR001806">
    <property type="entry name" value="Small_GTPase"/>
</dbReference>
<dbReference type="PANTHER" id="PTHR45704">
    <property type="entry name" value="RAS-LIKE FAMILY MEMBER 11"/>
    <property type="match status" value="1"/>
</dbReference>
<dbReference type="Pfam" id="PF00071">
    <property type="entry name" value="Ras"/>
    <property type="match status" value="1"/>
</dbReference>
<dbReference type="PRINTS" id="PR00449">
    <property type="entry name" value="RASTRNSFRMNG"/>
</dbReference>
<dbReference type="SMART" id="SM00175">
    <property type="entry name" value="RAB"/>
    <property type="match status" value="1"/>
</dbReference>
<dbReference type="SMART" id="SM00173">
    <property type="entry name" value="RAS"/>
    <property type="match status" value="1"/>
</dbReference>
<dbReference type="SUPFAM" id="SSF52540">
    <property type="entry name" value="P-loop containing nucleoside triphosphate hydrolases"/>
    <property type="match status" value="1"/>
</dbReference>
<dbReference type="PROSITE" id="PS51421">
    <property type="entry name" value="RAS"/>
    <property type="match status" value="1"/>
</dbReference>
<accession>A6QP66</accession>
<sequence>MNDVKLTVLGGEGTGKSALIVRFLTKRFIGEYASNFESIYNKHLCLEGKQLNLEIYDPCSQPQKAKFSLTSELHWADGFVIVYDISDRSSFAFAKALIYRIREPQTSHCKRPVESAVLLVGNKQDLCHVREVGWEEGHKLALDNRCQFCELSAAEQSLEVEMMFIRIIRDILTNFKLKEKRRYSGSKSMAKLINNVFGKRRKSV</sequence>
<name>RERGL_BOVIN</name>
<proteinExistence type="evidence at transcript level"/>